<feature type="signal peptide" evidence="1">
    <location>
        <begin position="1"/>
        <end position="23"/>
    </location>
</feature>
<feature type="peptide" id="PRO_0000442986" description="Peptide Im-5" evidence="2">
    <location>
        <begin position="24"/>
        <end position="48"/>
    </location>
</feature>
<feature type="propeptide" id="PRO_0000461831" evidence="7">
    <location>
        <begin position="49"/>
        <end position="79"/>
    </location>
</feature>
<reference evidence="9" key="1">
    <citation type="submission" date="2007-10" db="EMBL/GenBank/DDBJ databases">
        <title>Classification and functional annotation of ESTs from venom glands of Isometrus maculatus.</title>
        <authorList>
            <person name="Li W."/>
            <person name="Ma Y."/>
            <person name="Zhao R."/>
            <person name="Cao Z."/>
        </authorList>
    </citation>
    <scope>NUCLEOTIDE SEQUENCE [MRNA]</scope>
    <source>
        <tissue>Venom gland</tissue>
    </source>
</reference>
<reference key="2">
    <citation type="journal article" date="2017" name="Toxicon">
        <title>Complete de novo sequencing of antimicrobial peptides in the venom of the scorpion Isometrus maculatus.</title>
        <authorList>
            <person name="Miyashita M."/>
            <person name="Kitanaka A."/>
            <person name="Yakio M."/>
            <person name="Yamazaki Y."/>
            <person name="Nakagawa Y."/>
            <person name="Miyagawa H."/>
        </authorList>
    </citation>
    <scope>PROTEIN SEQUENCE OF 24-48</scope>
    <scope>FUNCTION</scope>
    <scope>SUBCELLULAR LOCATION</scope>
    <scope>MASS SPECTROMETRY</scope>
    <scope>TOXIC DOSE</scope>
    <scope>IDENTIFICATION BY MASS SPECTROMETRY</scope>
    <source>
        <tissue>Venom</tissue>
    </source>
</reference>
<reference key="3">
    <citation type="journal article" date="2021" name="Microb. Pathog.">
        <title>Identification of the scorpion venom-derived antimicrobial peptide Hp1404 as a new antimicrobial agent against carbapenem-resistant Acinetobacter baumannii.</title>
        <authorList>
            <person name="Luo X."/>
            <person name="Ye X."/>
            <person name="Ding L."/>
            <person name="Zhu W."/>
            <person name="Zhao Z."/>
            <person name="Luo D."/>
            <person name="Liu N."/>
            <person name="Sun L."/>
            <person name="Chen Z."/>
        </authorList>
    </citation>
    <scope>FUNCTION</scope>
    <scope>SYNTHESIS OF 24-48 (AMIDATED PEPTIDE)</scope>
</reference>
<organism>
    <name type="scientific">Isometrus maculatus</name>
    <name type="common">Lesser brown scorpion</name>
    <name type="synonym">Scorpio maculatus</name>
    <dbReference type="NCBI Taxonomy" id="497827"/>
    <lineage>
        <taxon>Eukaryota</taxon>
        <taxon>Metazoa</taxon>
        <taxon>Ecdysozoa</taxon>
        <taxon>Arthropoda</taxon>
        <taxon>Chelicerata</taxon>
        <taxon>Arachnida</taxon>
        <taxon>Scorpiones</taxon>
        <taxon>Buthida</taxon>
        <taxon>Buthoidea</taxon>
        <taxon>Buthidae</taxon>
        <taxon>Isometrus</taxon>
    </lineage>
</organism>
<keyword id="KW-0044">Antibiotic</keyword>
<keyword id="KW-0929">Antimicrobial</keyword>
<keyword id="KW-0204">Cytolysis</keyword>
<keyword id="KW-0903">Direct protein sequencing</keyword>
<keyword id="KW-0472">Membrane</keyword>
<keyword id="KW-0964">Secreted</keyword>
<keyword id="KW-0732">Signal</keyword>
<keyword id="KW-1052">Target cell membrane</keyword>
<keyword id="KW-1053">Target membrane</keyword>
<accession>C0HL58</accession>
<accession>A0A0U1TZB6</accession>
<proteinExistence type="evidence at protein level"/>
<comment type="function">
    <text evidence="2 3">Antimicrobial peptide that may act by disrupting the integrity of the bacterial cell membrane (PubMed:28941793, PubMed:34022355). Has antibacterial activity against Gram-negative bacterium E.coli NBRC 3972 (MIC=10 uM) and against Gram-positive bacteria S.aureus NBRC 13276 (MIC=2.5-5 uM) and B.subtilis NBRC 3009 (MIC=0.5-1 uM) (PubMed:28941793). Also shows potent activity against antibiotic-sensitive and -resistant Acinetobacter baumannii (MIC=1.8-3.6 uM) (PubMed:34022355). Shows cytolytic activity against human and sheep erythrocytes (PubMed:28941793, PubMed:34022355). Toxic to cricket A.domestica (PubMed:28941793).</text>
</comment>
<comment type="subcellular location">
    <subcellularLocation>
        <location evidence="2">Secreted</location>
    </subcellularLocation>
    <subcellularLocation>
        <location evidence="7">Target cell membrane</location>
    </subcellularLocation>
</comment>
<comment type="tissue specificity">
    <text evidence="7">Expressed by the venom gland.</text>
</comment>
<comment type="domain">
    <text evidence="8">Amphipathic and cationic peptide with an alpha-helical structure.</text>
</comment>
<comment type="mass spectrometry" mass="2803.7" method="MALDI" evidence="2"/>
<comment type="toxic dose">
    <text evidence="2">LD(50) is 61 nmol/g by intraabdominal injection into cricket A.domestica.</text>
</comment>
<comment type="miscellaneous">
    <text evidence="7">Fragments comprising residues 10-25, 1-19, 7-25, 1-22, 4-25 and 1-23 have been detected in venom but it is unclear whether they have a physiological role or are simply due to degradation.</text>
</comment>
<comment type="similarity">
    <text evidence="6">Belongs to the non-disulfide-bridged peptide (NDBP) superfamily. Medium-length antimicrobial peptide (group 3) family.</text>
</comment>
<comment type="caution">
    <text evidence="8">Functionally tested as a C-terminally amidated peptide, even though the precursor sequence does not support amidation.</text>
</comment>
<name>NDB4B_ISOMC</name>
<evidence type="ECO:0000255" key="1"/>
<evidence type="ECO:0000269" key="2">
    <source>
    </source>
</evidence>
<evidence type="ECO:0000269" key="3">
    <source>
    </source>
</evidence>
<evidence type="ECO:0000303" key="4">
    <source>
    </source>
</evidence>
<evidence type="ECO:0000303" key="5">
    <source>
    </source>
</evidence>
<evidence type="ECO:0000305" key="6"/>
<evidence type="ECO:0000305" key="7">
    <source>
    </source>
</evidence>
<evidence type="ECO:0000305" key="8">
    <source>
    </source>
</evidence>
<evidence type="ECO:0000312" key="9">
    <source>
        <dbReference type="EMBL" id="ACD11815.1"/>
    </source>
</evidence>
<sequence length="79" mass="9456">MKYRKQLLVLFFAYFLVVNESEAFLGSLFSIGSKLLPGVIKLFQRKKQRALMKRDLQDRMDPYQRNLKLDRYLKQLALD</sequence>
<protein>
    <recommendedName>
        <fullName evidence="4">Peptide Im-5</fullName>
        <shortName evidence="5">Im5</shortName>
    </recommendedName>
</protein>
<dbReference type="EMBL" id="EU252227">
    <property type="protein sequence ID" value="ACD11815.1"/>
    <property type="molecule type" value="mRNA"/>
</dbReference>
<dbReference type="GO" id="GO:0005576">
    <property type="term" value="C:extracellular region"/>
    <property type="evidence" value="ECO:0000314"/>
    <property type="project" value="UniProtKB"/>
</dbReference>
<dbReference type="GO" id="GO:0016020">
    <property type="term" value="C:membrane"/>
    <property type="evidence" value="ECO:0007669"/>
    <property type="project" value="UniProtKB-KW"/>
</dbReference>
<dbReference type="GO" id="GO:0044218">
    <property type="term" value="C:other organism cell membrane"/>
    <property type="evidence" value="ECO:0007669"/>
    <property type="project" value="UniProtKB-KW"/>
</dbReference>
<dbReference type="GO" id="GO:0090729">
    <property type="term" value="F:toxin activity"/>
    <property type="evidence" value="ECO:0000314"/>
    <property type="project" value="UniProtKB"/>
</dbReference>
<dbReference type="GO" id="GO:0051715">
    <property type="term" value="P:cytolysis in another organism"/>
    <property type="evidence" value="ECO:0000314"/>
    <property type="project" value="UniProtKB"/>
</dbReference>
<dbReference type="GO" id="GO:0050829">
    <property type="term" value="P:defense response to Gram-negative bacterium"/>
    <property type="evidence" value="ECO:0000314"/>
    <property type="project" value="UniProtKB"/>
</dbReference>
<dbReference type="GO" id="GO:0050830">
    <property type="term" value="P:defense response to Gram-positive bacterium"/>
    <property type="evidence" value="ECO:0000314"/>
    <property type="project" value="UniProtKB"/>
</dbReference>
<dbReference type="GO" id="GO:0031640">
    <property type="term" value="P:killing of cells of another organism"/>
    <property type="evidence" value="ECO:0000314"/>
    <property type="project" value="UniProtKB"/>
</dbReference>